<comment type="function">
    <text>Endohydrolysis of the di-N-acetylchitobiosyl unit in high-mannose glycopeptides and glycoproteins. Complex biantennary glycans are the preferred substrates. Tri- and tetraantennary glycans are not hydrolyzed, and high mannose glycans are very poor substrates.</text>
</comment>
<comment type="catalytic activity">
    <reaction>
        <text>an N(4)-(oligosaccharide-(1-&gt;3)-[oligosaccharide-(1-&gt;6)]-beta-D-Man-(1-&gt;4)-beta-D-GlcNAc-(1-&gt;4)-alpha-D-GlcNAc)-L-asparaginyl-[protein] + H2O = an oligosaccharide-(1-&gt;3)-[oligosaccharide-(1-&gt;6)]-beta-D-Man-(1-&gt;4)-D-GlcNAc + N(4)-(N-acetyl-beta-D-glucosaminyl)-L-asparaginyl-[protein]</text>
        <dbReference type="Rhea" id="RHEA:73067"/>
        <dbReference type="Rhea" id="RHEA-COMP:12603"/>
        <dbReference type="Rhea" id="RHEA-COMP:18176"/>
        <dbReference type="ChEBI" id="CHEBI:15377"/>
        <dbReference type="ChEBI" id="CHEBI:132248"/>
        <dbReference type="ChEBI" id="CHEBI:192714"/>
        <dbReference type="ChEBI" id="CHEBI:192715"/>
        <dbReference type="EC" id="3.2.1.96"/>
    </reaction>
</comment>
<comment type="subunit">
    <text>Monomer.</text>
</comment>
<comment type="subcellular location">
    <subcellularLocation>
        <location>Secreted</location>
    </subcellularLocation>
</comment>
<comment type="PTM">
    <text>Carbohydrates at Ser-73, Ser-89 and Ser-143 consist of (2-OMe)Man1-4GlcNAcU1-4GlcU1-4Glc1-4(2-OMe)GlcU1-4[(2-OMe)Rham1-2]Man.</text>
</comment>
<comment type="similarity">
    <text evidence="3">Belongs to the glycosyl hydrolase 18 family.</text>
</comment>
<accession>P36912</accession>
<proteinExistence type="evidence at protein level"/>
<name>EBA2_ELIME</name>
<reference key="1">
    <citation type="journal article" date="1993" name="J. Biol. Chem.">
        <title>Multiple endoglycosidase F activities expressed by Flavobacterium meningosepticum endoglycosidases F2 and F3. Molecular cloning, primary sequence, and enzyme expression.</title>
        <authorList>
            <person name="Tarentino A.L."/>
            <person name="Quinones G."/>
            <person name="Changchien L.-M."/>
            <person name="Plummer T.H. Jr."/>
        </authorList>
    </citation>
    <scope>NUCLEOTIDE SEQUENCE [GENOMIC DNA]</scope>
    <scope>PARTIAL PROTEIN SEQUENCE</scope>
</reference>
<reference key="2">
    <citation type="journal article" date="1995" name="J. Biol. Chem.">
        <title>Novel, specific O-glycosylation of secreted Flavobacterium meningosepticum proteins. Asp-Ser and Asp-Thr-Thr consensus sites.</title>
        <authorList>
            <person name="Plummer T.H. Jr."/>
            <person name="Tarentino A.L."/>
            <person name="Hauer C.R."/>
        </authorList>
    </citation>
    <scope>GLYCOSYLATION AT SER-73; SER-89 AND SER-143</scope>
    <scope>IDENTIFICATION BY MASS SPECTROMETRY</scope>
</reference>
<reference key="3">
    <citation type="journal article" date="1995" name="J. Biol. Chem.">
        <title>Detailed structural analysis of a novel, specific O-linked glycan from the prokaryote Flavobacterium meningosepticum.</title>
        <authorList>
            <person name="Reinhold B.B."/>
            <person name="Hauer C.R."/>
            <person name="Plummer T.H. Jr."/>
            <person name="Reinhold V.N."/>
        </authorList>
    </citation>
    <scope>STRUCTURE OF CARBOHYDRATES</scope>
    <scope>IDENTIFICATION BY MASS SPECTROMETRY</scope>
</reference>
<sequence length="335" mass="37356">MKTANFSFALCLSVVIMLFIKCTRSEQDLSVTKDAIAQKSGVTVSAVNLSNLIAYKNSDHQISAGYYRTWRDSATASGNLPSMRWLPDSLDMVMVFPDYTPPENAYWNTLKTNYVPYLHKRGTKVIITLGDLNSATTTGGQDSIGYSSWAKGIYDKWVGEYNLDGIDIDIESSPSGATLTKFVAATKALSKYFGPKSGTGKTFVYDTNQNPTNFFIQTAPRYNYVFLQAYGRSTTNLTTVSGLYAPYISMKQFLPGFSFYEENGYPGNYWNDVRYPQNGTGRAYDYARWQPATGKKGGVFSYAIERDAPLTSSNDNTLRAPNFRVTKDLIKIMNP</sequence>
<evidence type="ECO:0000255" key="1">
    <source>
        <dbReference type="PROSITE-ProRule" id="PRU01258"/>
    </source>
</evidence>
<evidence type="ECO:0000269" key="2">
    <source>
    </source>
</evidence>
<evidence type="ECO:0000305" key="3"/>
<dbReference type="EC" id="3.2.1.96"/>
<dbReference type="EMBL" id="L06331">
    <property type="protein sequence ID" value="AAA24923.1"/>
    <property type="molecule type" value="Genomic_DNA"/>
</dbReference>
<dbReference type="PIR" id="A46678">
    <property type="entry name" value="A46678"/>
</dbReference>
<dbReference type="SMR" id="P36912"/>
<dbReference type="CAZy" id="GH18">
    <property type="family name" value="Glycoside Hydrolase Family 18"/>
</dbReference>
<dbReference type="GlyCosmos" id="P36912">
    <property type="glycosylation" value="3 sites, No reported glycans"/>
</dbReference>
<dbReference type="iPTMnet" id="P36912"/>
<dbReference type="GO" id="GO:0005576">
    <property type="term" value="C:extracellular region"/>
    <property type="evidence" value="ECO:0007669"/>
    <property type="project" value="UniProtKB-SubCell"/>
</dbReference>
<dbReference type="GO" id="GO:0033925">
    <property type="term" value="F:mannosyl-glycoprotein endo-beta-N-acetylglucosaminidase activity"/>
    <property type="evidence" value="ECO:0007669"/>
    <property type="project" value="UniProtKB-EC"/>
</dbReference>
<dbReference type="GO" id="GO:0005975">
    <property type="term" value="P:carbohydrate metabolic process"/>
    <property type="evidence" value="ECO:0007669"/>
    <property type="project" value="InterPro"/>
</dbReference>
<dbReference type="CDD" id="cd06542">
    <property type="entry name" value="GH18_EndoS-like"/>
    <property type="match status" value="1"/>
</dbReference>
<dbReference type="Gene3D" id="3.20.20.80">
    <property type="entry name" value="Glycosidases"/>
    <property type="match status" value="1"/>
</dbReference>
<dbReference type="InterPro" id="IPR057016">
    <property type="entry name" value="EndoS_F2-like_TIM-barrel"/>
</dbReference>
<dbReference type="InterPro" id="IPR001223">
    <property type="entry name" value="Glyco_hydro18_cat"/>
</dbReference>
<dbReference type="InterPro" id="IPR001579">
    <property type="entry name" value="Glyco_hydro_18_chit_AS"/>
</dbReference>
<dbReference type="InterPro" id="IPR017853">
    <property type="entry name" value="Glycoside_hydrolase_SF"/>
</dbReference>
<dbReference type="Pfam" id="PF23916">
    <property type="entry name" value="TIM-barrel_EndoS"/>
    <property type="match status" value="1"/>
</dbReference>
<dbReference type="SUPFAM" id="SSF51445">
    <property type="entry name" value="(Trans)glycosidases"/>
    <property type="match status" value="1"/>
</dbReference>
<dbReference type="PROSITE" id="PS01095">
    <property type="entry name" value="GH18_1"/>
    <property type="match status" value="1"/>
</dbReference>
<dbReference type="PROSITE" id="PS51910">
    <property type="entry name" value="GH18_2"/>
    <property type="match status" value="1"/>
</dbReference>
<keyword id="KW-0903">Direct protein sequencing</keyword>
<keyword id="KW-0325">Glycoprotein</keyword>
<keyword id="KW-0326">Glycosidase</keyword>
<keyword id="KW-0378">Hydrolase</keyword>
<keyword id="KW-0964">Secreted</keyword>
<keyword id="KW-0732">Signal</keyword>
<gene>
    <name type="primary">endOF2</name>
</gene>
<feature type="signal peptide">
    <location>
        <begin position="1"/>
        <end position="45"/>
    </location>
</feature>
<feature type="chain" id="PRO_0000011956" description="Endo-beta-N-acetylglucosaminidase F2">
    <location>
        <begin position="46"/>
        <end position="335"/>
    </location>
</feature>
<feature type="domain" description="GH18" evidence="1">
    <location>
        <begin position="61"/>
        <end position="321"/>
    </location>
</feature>
<feature type="active site" description="Proton donor" evidence="1">
    <location>
        <position position="171"/>
    </location>
</feature>
<feature type="glycosylation site" description="O-linked (Man...) serine" evidence="2">
    <location>
        <position position="73"/>
    </location>
</feature>
<feature type="glycosylation site" description="O-linked (Man...) serine" evidence="2">
    <location>
        <position position="89"/>
    </location>
</feature>
<feature type="glycosylation site" description="O-linked (Man...) serine" evidence="2">
    <location>
        <position position="143"/>
    </location>
</feature>
<protein>
    <recommendedName>
        <fullName>Endo-beta-N-acetylglucosaminidase F2</fullName>
        <ecNumber>3.2.1.96</ecNumber>
    </recommendedName>
    <alternativeName>
        <fullName>Di-N-acetylchitobiosyl beta-N-acetylglucosaminidase F2</fullName>
    </alternativeName>
    <alternativeName>
        <fullName>Endoglycosidase F2</fullName>
    </alternativeName>
    <alternativeName>
        <fullName>Mannosyl-glycoprotein endo-beta-N-acetyl-glucosaminidase F2</fullName>
    </alternativeName>
</protein>
<organism>
    <name type="scientific">Elizabethkingia meningoseptica</name>
    <name type="common">Chryseobacterium meningosepticum</name>
    <dbReference type="NCBI Taxonomy" id="238"/>
    <lineage>
        <taxon>Bacteria</taxon>
        <taxon>Pseudomonadati</taxon>
        <taxon>Bacteroidota</taxon>
        <taxon>Flavobacteriia</taxon>
        <taxon>Flavobacteriales</taxon>
        <taxon>Weeksellaceae</taxon>
        <taxon>Elizabethkingia</taxon>
    </lineage>
</organism>